<reference key="1">
    <citation type="submission" date="2007-09" db="EMBL/GenBank/DDBJ databases">
        <title>Complete sequence of chromosome of Serratia proteamaculans 568.</title>
        <authorList>
            <consortium name="US DOE Joint Genome Institute"/>
            <person name="Copeland A."/>
            <person name="Lucas S."/>
            <person name="Lapidus A."/>
            <person name="Barry K."/>
            <person name="Glavina del Rio T."/>
            <person name="Dalin E."/>
            <person name="Tice H."/>
            <person name="Pitluck S."/>
            <person name="Chain P."/>
            <person name="Malfatti S."/>
            <person name="Shin M."/>
            <person name="Vergez L."/>
            <person name="Schmutz J."/>
            <person name="Larimer F."/>
            <person name="Land M."/>
            <person name="Hauser L."/>
            <person name="Kyrpides N."/>
            <person name="Kim E."/>
            <person name="Taghavi S."/>
            <person name="Newman L."/>
            <person name="Vangronsveld J."/>
            <person name="van der Lelie D."/>
            <person name="Richardson P."/>
        </authorList>
    </citation>
    <scope>NUCLEOTIDE SEQUENCE [LARGE SCALE GENOMIC DNA]</scope>
    <source>
        <strain>568</strain>
    </source>
</reference>
<keyword id="KW-0963">Cytoplasm</keyword>
<keyword id="KW-0648">Protein biosynthesis</keyword>
<comment type="function">
    <text evidence="1">Responsible for the release of ribosomes from messenger RNA at the termination of protein biosynthesis. May increase the efficiency of translation by recycling ribosomes from one round of translation to another.</text>
</comment>
<comment type="subcellular location">
    <subcellularLocation>
        <location evidence="1">Cytoplasm</location>
    </subcellularLocation>
</comment>
<comment type="similarity">
    <text evidence="1">Belongs to the RRF family.</text>
</comment>
<gene>
    <name evidence="1" type="primary">frr</name>
    <name type="ordered locus">Spro_3787</name>
</gene>
<accession>A8GIE3</accession>
<feature type="chain" id="PRO_1000057296" description="Ribosome-recycling factor">
    <location>
        <begin position="1"/>
        <end position="185"/>
    </location>
</feature>
<protein>
    <recommendedName>
        <fullName evidence="1">Ribosome-recycling factor</fullName>
        <shortName evidence="1">RRF</shortName>
    </recommendedName>
    <alternativeName>
        <fullName evidence="1">Ribosome-releasing factor</fullName>
    </alternativeName>
</protein>
<organism>
    <name type="scientific">Serratia proteamaculans (strain 568)</name>
    <dbReference type="NCBI Taxonomy" id="399741"/>
    <lineage>
        <taxon>Bacteria</taxon>
        <taxon>Pseudomonadati</taxon>
        <taxon>Pseudomonadota</taxon>
        <taxon>Gammaproteobacteria</taxon>
        <taxon>Enterobacterales</taxon>
        <taxon>Yersiniaceae</taxon>
        <taxon>Serratia</taxon>
    </lineage>
</organism>
<name>RRF_SERP5</name>
<dbReference type="EMBL" id="CP000826">
    <property type="protein sequence ID" value="ABV42883.1"/>
    <property type="molecule type" value="Genomic_DNA"/>
</dbReference>
<dbReference type="SMR" id="A8GIE3"/>
<dbReference type="STRING" id="399741.Spro_3787"/>
<dbReference type="KEGG" id="spe:Spro_3787"/>
<dbReference type="eggNOG" id="COG0233">
    <property type="taxonomic scope" value="Bacteria"/>
</dbReference>
<dbReference type="HOGENOM" id="CLU_073981_2_1_6"/>
<dbReference type="OrthoDB" id="9804006at2"/>
<dbReference type="GO" id="GO:0005829">
    <property type="term" value="C:cytosol"/>
    <property type="evidence" value="ECO:0007669"/>
    <property type="project" value="GOC"/>
</dbReference>
<dbReference type="GO" id="GO:0043023">
    <property type="term" value="F:ribosomal large subunit binding"/>
    <property type="evidence" value="ECO:0007669"/>
    <property type="project" value="TreeGrafter"/>
</dbReference>
<dbReference type="GO" id="GO:0002184">
    <property type="term" value="P:cytoplasmic translational termination"/>
    <property type="evidence" value="ECO:0007669"/>
    <property type="project" value="TreeGrafter"/>
</dbReference>
<dbReference type="CDD" id="cd00520">
    <property type="entry name" value="RRF"/>
    <property type="match status" value="1"/>
</dbReference>
<dbReference type="FunFam" id="1.10.132.20:FF:000001">
    <property type="entry name" value="Ribosome-recycling factor"/>
    <property type="match status" value="1"/>
</dbReference>
<dbReference type="FunFam" id="3.30.1360.40:FF:000001">
    <property type="entry name" value="Ribosome-recycling factor"/>
    <property type="match status" value="1"/>
</dbReference>
<dbReference type="Gene3D" id="3.30.1360.40">
    <property type="match status" value="1"/>
</dbReference>
<dbReference type="Gene3D" id="1.10.132.20">
    <property type="entry name" value="Ribosome-recycling factor"/>
    <property type="match status" value="1"/>
</dbReference>
<dbReference type="HAMAP" id="MF_00040">
    <property type="entry name" value="RRF"/>
    <property type="match status" value="1"/>
</dbReference>
<dbReference type="InterPro" id="IPR002661">
    <property type="entry name" value="Ribosome_recyc_fac"/>
</dbReference>
<dbReference type="InterPro" id="IPR023584">
    <property type="entry name" value="Ribosome_recyc_fac_dom"/>
</dbReference>
<dbReference type="InterPro" id="IPR036191">
    <property type="entry name" value="RRF_sf"/>
</dbReference>
<dbReference type="NCBIfam" id="TIGR00496">
    <property type="entry name" value="frr"/>
    <property type="match status" value="1"/>
</dbReference>
<dbReference type="PANTHER" id="PTHR20982:SF3">
    <property type="entry name" value="MITOCHONDRIAL RIBOSOME RECYCLING FACTOR PSEUDO 1"/>
    <property type="match status" value="1"/>
</dbReference>
<dbReference type="PANTHER" id="PTHR20982">
    <property type="entry name" value="RIBOSOME RECYCLING FACTOR"/>
    <property type="match status" value="1"/>
</dbReference>
<dbReference type="Pfam" id="PF01765">
    <property type="entry name" value="RRF"/>
    <property type="match status" value="1"/>
</dbReference>
<dbReference type="SUPFAM" id="SSF55194">
    <property type="entry name" value="Ribosome recycling factor, RRF"/>
    <property type="match status" value="1"/>
</dbReference>
<proteinExistence type="inferred from homology"/>
<sequence>MINEIRKDADSRMEKSVEAFKNQISKIRTGRASPSILDGIMVEYYGASTPLRQLASVTVEDSRTLKINVFDRSISAAVEKAIMSSDLGLNPSSAGSDIRVPLPALTEERRKDLIKIVRNEAEQGRVAVRNVRRDANDKVKALLKDKEISEDEDRRSQDDVQKLTDAYIKLLDAALADKEKELMEF</sequence>
<evidence type="ECO:0000255" key="1">
    <source>
        <dbReference type="HAMAP-Rule" id="MF_00040"/>
    </source>
</evidence>